<accession>Q88VB2</accession>
<accession>F9UQ94</accession>
<sequence>MIKMRDIIREGNHTLRAEAKQVKFPLSEADQKLANDMMEYLENSQDPELAKKYGLRAGVGLAAPQVDVSEQMAAVLVPSENEDDEPVFKDVIINPVIISHSVQPGALTEGEGCLSVDRDIAGYVIRHDRITLRYYNMAGEEKKIRLKNYPAIVCQHEIDHLHGILFYDHINGDNPFAADDDLVLIS</sequence>
<keyword id="KW-0378">Hydrolase</keyword>
<keyword id="KW-0408">Iron</keyword>
<keyword id="KW-0479">Metal-binding</keyword>
<keyword id="KW-0648">Protein biosynthesis</keyword>
<keyword id="KW-1185">Reference proteome</keyword>
<protein>
    <recommendedName>
        <fullName evidence="1">Peptide deformylase</fullName>
        <shortName evidence="1">PDF</shortName>
        <ecNumber evidence="1">3.5.1.88</ecNumber>
    </recommendedName>
    <alternativeName>
        <fullName evidence="1">Polypeptide deformylase</fullName>
    </alternativeName>
</protein>
<evidence type="ECO:0000255" key="1">
    <source>
        <dbReference type="HAMAP-Rule" id="MF_00163"/>
    </source>
</evidence>
<comment type="function">
    <text evidence="1">Removes the formyl group from the N-terminal Met of newly synthesized proteins. Requires at least a dipeptide for an efficient rate of reaction. N-terminal L-methionine is a prerequisite for activity but the enzyme has broad specificity at other positions.</text>
</comment>
<comment type="catalytic activity">
    <reaction evidence="1">
        <text>N-terminal N-formyl-L-methionyl-[peptide] + H2O = N-terminal L-methionyl-[peptide] + formate</text>
        <dbReference type="Rhea" id="RHEA:24420"/>
        <dbReference type="Rhea" id="RHEA-COMP:10639"/>
        <dbReference type="Rhea" id="RHEA-COMP:10640"/>
        <dbReference type="ChEBI" id="CHEBI:15377"/>
        <dbReference type="ChEBI" id="CHEBI:15740"/>
        <dbReference type="ChEBI" id="CHEBI:49298"/>
        <dbReference type="ChEBI" id="CHEBI:64731"/>
        <dbReference type="EC" id="3.5.1.88"/>
    </reaction>
</comment>
<comment type="cofactor">
    <cofactor evidence="1">
        <name>Fe(2+)</name>
        <dbReference type="ChEBI" id="CHEBI:29033"/>
    </cofactor>
    <text evidence="1">Binds 1 Fe(2+) ion.</text>
</comment>
<comment type="similarity">
    <text evidence="1">Belongs to the polypeptide deformylase family.</text>
</comment>
<name>DEF_LACPL</name>
<dbReference type="EC" id="3.5.1.88" evidence="1"/>
<dbReference type="EMBL" id="AL935263">
    <property type="protein sequence ID" value="CCC79383.1"/>
    <property type="molecule type" value="Genomic_DNA"/>
</dbReference>
<dbReference type="RefSeq" id="WP_003645922.1">
    <property type="nucleotide sequence ID" value="NC_004567.2"/>
</dbReference>
<dbReference type="RefSeq" id="YP_004889897.1">
    <property type="nucleotide sequence ID" value="NC_004567.2"/>
</dbReference>
<dbReference type="SMR" id="Q88VB2"/>
<dbReference type="STRING" id="220668.lp_2155"/>
<dbReference type="EnsemblBacteria" id="CCC79383">
    <property type="protein sequence ID" value="CCC79383"/>
    <property type="gene ID" value="lp_2155"/>
</dbReference>
<dbReference type="GeneID" id="89669424"/>
<dbReference type="KEGG" id="lpl:lp_2155"/>
<dbReference type="PATRIC" id="fig|220668.9.peg.1824"/>
<dbReference type="eggNOG" id="COG0242">
    <property type="taxonomic scope" value="Bacteria"/>
</dbReference>
<dbReference type="HOGENOM" id="CLU_061901_4_0_9"/>
<dbReference type="OrthoDB" id="9784988at2"/>
<dbReference type="PhylomeDB" id="Q88VB2"/>
<dbReference type="Proteomes" id="UP000000432">
    <property type="component" value="Chromosome"/>
</dbReference>
<dbReference type="GO" id="GO:0046872">
    <property type="term" value="F:metal ion binding"/>
    <property type="evidence" value="ECO:0007669"/>
    <property type="project" value="UniProtKB-KW"/>
</dbReference>
<dbReference type="GO" id="GO:0042586">
    <property type="term" value="F:peptide deformylase activity"/>
    <property type="evidence" value="ECO:0007669"/>
    <property type="project" value="UniProtKB-UniRule"/>
</dbReference>
<dbReference type="GO" id="GO:0043686">
    <property type="term" value="P:co-translational protein modification"/>
    <property type="evidence" value="ECO:0007669"/>
    <property type="project" value="TreeGrafter"/>
</dbReference>
<dbReference type="GO" id="GO:0006412">
    <property type="term" value="P:translation"/>
    <property type="evidence" value="ECO:0007669"/>
    <property type="project" value="UniProtKB-UniRule"/>
</dbReference>
<dbReference type="CDD" id="cd00487">
    <property type="entry name" value="Pep_deformylase"/>
    <property type="match status" value="1"/>
</dbReference>
<dbReference type="FunFam" id="3.90.45.10:FF:000002">
    <property type="entry name" value="Peptide deformylase"/>
    <property type="match status" value="1"/>
</dbReference>
<dbReference type="Gene3D" id="3.90.45.10">
    <property type="entry name" value="Peptide deformylase"/>
    <property type="match status" value="1"/>
</dbReference>
<dbReference type="HAMAP" id="MF_00163">
    <property type="entry name" value="Pep_deformylase"/>
    <property type="match status" value="1"/>
</dbReference>
<dbReference type="InterPro" id="IPR023635">
    <property type="entry name" value="Peptide_deformylase"/>
</dbReference>
<dbReference type="InterPro" id="IPR036821">
    <property type="entry name" value="Peptide_deformylase_sf"/>
</dbReference>
<dbReference type="NCBIfam" id="TIGR00079">
    <property type="entry name" value="pept_deformyl"/>
    <property type="match status" value="1"/>
</dbReference>
<dbReference type="PANTHER" id="PTHR10458">
    <property type="entry name" value="PEPTIDE DEFORMYLASE"/>
    <property type="match status" value="1"/>
</dbReference>
<dbReference type="PANTHER" id="PTHR10458:SF8">
    <property type="entry name" value="PEPTIDE DEFORMYLASE 2"/>
    <property type="match status" value="1"/>
</dbReference>
<dbReference type="Pfam" id="PF01327">
    <property type="entry name" value="Pep_deformylase"/>
    <property type="match status" value="1"/>
</dbReference>
<dbReference type="PIRSF" id="PIRSF004749">
    <property type="entry name" value="Pep_def"/>
    <property type="match status" value="1"/>
</dbReference>
<dbReference type="PRINTS" id="PR01576">
    <property type="entry name" value="PDEFORMYLASE"/>
</dbReference>
<dbReference type="SUPFAM" id="SSF56420">
    <property type="entry name" value="Peptide deformylase"/>
    <property type="match status" value="1"/>
</dbReference>
<reference key="1">
    <citation type="journal article" date="2003" name="Proc. Natl. Acad. Sci. U.S.A.">
        <title>Complete genome sequence of Lactobacillus plantarum WCFS1.</title>
        <authorList>
            <person name="Kleerebezem M."/>
            <person name="Boekhorst J."/>
            <person name="van Kranenburg R."/>
            <person name="Molenaar D."/>
            <person name="Kuipers O.P."/>
            <person name="Leer R."/>
            <person name="Tarchini R."/>
            <person name="Peters S.A."/>
            <person name="Sandbrink H.M."/>
            <person name="Fiers M.W.E.J."/>
            <person name="Stiekema W."/>
            <person name="Klein Lankhorst R.M."/>
            <person name="Bron P.A."/>
            <person name="Hoffer S.M."/>
            <person name="Nierop Groot M.N."/>
            <person name="Kerkhoven R."/>
            <person name="De Vries M."/>
            <person name="Ursing B."/>
            <person name="De Vos W.M."/>
            <person name="Siezen R.J."/>
        </authorList>
    </citation>
    <scope>NUCLEOTIDE SEQUENCE [LARGE SCALE GENOMIC DNA]</scope>
    <source>
        <strain>ATCC BAA-793 / NCIMB 8826 / WCFS1</strain>
    </source>
</reference>
<reference key="2">
    <citation type="journal article" date="2012" name="J. Bacteriol.">
        <title>Complete resequencing and reannotation of the Lactobacillus plantarum WCFS1 genome.</title>
        <authorList>
            <person name="Siezen R.J."/>
            <person name="Francke C."/>
            <person name="Renckens B."/>
            <person name="Boekhorst J."/>
            <person name="Wels M."/>
            <person name="Kleerebezem M."/>
            <person name="van Hijum S.A."/>
        </authorList>
    </citation>
    <scope>NUCLEOTIDE SEQUENCE [LARGE SCALE GENOMIC DNA]</scope>
    <scope>GENOME REANNOTATION</scope>
    <source>
        <strain>ATCC BAA-793 / NCIMB 8826 / WCFS1</strain>
    </source>
</reference>
<organism>
    <name type="scientific">Lactiplantibacillus plantarum (strain ATCC BAA-793 / NCIMB 8826 / WCFS1)</name>
    <name type="common">Lactobacillus plantarum</name>
    <dbReference type="NCBI Taxonomy" id="220668"/>
    <lineage>
        <taxon>Bacteria</taxon>
        <taxon>Bacillati</taxon>
        <taxon>Bacillota</taxon>
        <taxon>Bacilli</taxon>
        <taxon>Lactobacillales</taxon>
        <taxon>Lactobacillaceae</taxon>
        <taxon>Lactiplantibacillus</taxon>
    </lineage>
</organism>
<feature type="chain" id="PRO_0000082793" description="Peptide deformylase">
    <location>
        <begin position="1"/>
        <end position="186"/>
    </location>
</feature>
<feature type="active site" evidence="1">
    <location>
        <position position="157"/>
    </location>
</feature>
<feature type="binding site" evidence="1">
    <location>
        <position position="113"/>
    </location>
    <ligand>
        <name>Fe cation</name>
        <dbReference type="ChEBI" id="CHEBI:24875"/>
    </ligand>
</feature>
<feature type="binding site" evidence="1">
    <location>
        <position position="156"/>
    </location>
    <ligand>
        <name>Fe cation</name>
        <dbReference type="ChEBI" id="CHEBI:24875"/>
    </ligand>
</feature>
<feature type="binding site" evidence="1">
    <location>
        <position position="160"/>
    </location>
    <ligand>
        <name>Fe cation</name>
        <dbReference type="ChEBI" id="CHEBI:24875"/>
    </ligand>
</feature>
<gene>
    <name evidence="1" type="primary">def</name>
    <name type="synonym">def1</name>
    <name type="ordered locus">lp_2155</name>
</gene>
<proteinExistence type="inferred from homology"/>